<accession>Q9GLP2</accession>
<proteinExistence type="evidence at transcript level"/>
<evidence type="ECO:0000250" key="1"/>
<evidence type="ECO:0000250" key="2">
    <source>
        <dbReference type="UniProtKB" id="P00745"/>
    </source>
</evidence>
<evidence type="ECO:0000250" key="3">
    <source>
        <dbReference type="UniProtKB" id="P04070"/>
    </source>
</evidence>
<evidence type="ECO:0000255" key="4"/>
<evidence type="ECO:0000255" key="5">
    <source>
        <dbReference type="PROSITE-ProRule" id="PRU00076"/>
    </source>
</evidence>
<evidence type="ECO:0000255" key="6">
    <source>
        <dbReference type="PROSITE-ProRule" id="PRU00274"/>
    </source>
</evidence>
<evidence type="ECO:0000255" key="7">
    <source>
        <dbReference type="PROSITE-ProRule" id="PRU00463"/>
    </source>
</evidence>
<protein>
    <recommendedName>
        <fullName>Vitamin K-dependent protein C</fullName>
        <ecNumber>3.4.21.69</ecNumber>
    </recommendedName>
    <alternativeName>
        <fullName>Anticoagulant protein C</fullName>
    </alternativeName>
    <alternativeName>
        <fullName>Autoprothrombin IIA</fullName>
    </alternativeName>
    <alternativeName>
        <fullName>Blood coagulation factor XIV</fullName>
    </alternativeName>
    <component>
        <recommendedName>
            <fullName>Vitamin K-dependent protein C light chain</fullName>
        </recommendedName>
    </component>
    <component>
        <recommendedName>
            <fullName>Vitamin K-dependent protein C heavy chain</fullName>
        </recommendedName>
    </component>
    <component>
        <recommendedName>
            <fullName>Activation peptide</fullName>
        </recommendedName>
    </component>
</protein>
<sequence>MWQLASLLLLLIIWAVSSTPVPPDSVFSSSQRAHQMLRSKRANSFLEELRPSSLERECKEETCDFEEAREIFQNTENTMAFWSKYHDGDQCAVSPPEHLCDSPCCGRGTCIDGLGGFRCDCAQGWEGRFCLHEVRFSNCSTENGGCAHYCLEEEGGRRCACAPGYRLGDDHLQCEPKVRSPCGRLGNRMEKKRKNLKRDTDQVDKKEDQIDPRLVNGKQSPWGESPWQVILLDSKKKLACGAVLIHVSWVLTAAHCLDDYKKLTVRLGEYDLRRREKWEVDLDIKEFLVHPNYTRSTSDNDIALLRLAEPATFSQTIVPICLPDSGLSERELTRVGQETVVTGWGYRSEAKTNRSFILNFIKVPVAPHNECVQAMHNKISENMLCAGILGDSRDACEGDSGGPMVASFRGTWFLVGLVSWGEGCGRLHNYGVYTKVSRYLDWIHGHIRMEEAFHKNQVP</sequence>
<dbReference type="EC" id="3.4.21.69"/>
<dbReference type="EMBL" id="AF191307">
    <property type="protein sequence ID" value="AAG28380.1"/>
    <property type="molecule type" value="mRNA"/>
</dbReference>
<dbReference type="RefSeq" id="NP_999083.1">
    <property type="nucleotide sequence ID" value="NM_213918.1"/>
</dbReference>
<dbReference type="SMR" id="Q9GLP2"/>
<dbReference type="FunCoup" id="Q9GLP2">
    <property type="interactions" value="154"/>
</dbReference>
<dbReference type="STRING" id="9823.ENSSSCP00000026729"/>
<dbReference type="MEROPS" id="S01.218"/>
<dbReference type="GlyCosmos" id="Q9GLP2">
    <property type="glycosylation" value="3 sites, No reported glycans"/>
</dbReference>
<dbReference type="GlyGen" id="Q9GLP2">
    <property type="glycosylation" value="3 sites"/>
</dbReference>
<dbReference type="PaxDb" id="9823-ENSSSCP00000026729"/>
<dbReference type="PeptideAtlas" id="Q9GLP2"/>
<dbReference type="GeneID" id="396954"/>
<dbReference type="KEGG" id="ssc:396954"/>
<dbReference type="CTD" id="5624"/>
<dbReference type="eggNOG" id="ENOG502QQ3W">
    <property type="taxonomic scope" value="Eukaryota"/>
</dbReference>
<dbReference type="InParanoid" id="Q9GLP2"/>
<dbReference type="OrthoDB" id="9028152at2759"/>
<dbReference type="Proteomes" id="UP000008227">
    <property type="component" value="Unplaced"/>
</dbReference>
<dbReference type="Proteomes" id="UP000314985">
    <property type="component" value="Unplaced"/>
</dbReference>
<dbReference type="Proteomes" id="UP000694570">
    <property type="component" value="Unplaced"/>
</dbReference>
<dbReference type="Proteomes" id="UP000694571">
    <property type="component" value="Unplaced"/>
</dbReference>
<dbReference type="Proteomes" id="UP000694720">
    <property type="component" value="Unplaced"/>
</dbReference>
<dbReference type="Proteomes" id="UP000694722">
    <property type="component" value="Unplaced"/>
</dbReference>
<dbReference type="Proteomes" id="UP000694723">
    <property type="component" value="Unplaced"/>
</dbReference>
<dbReference type="Proteomes" id="UP000694724">
    <property type="component" value="Unplaced"/>
</dbReference>
<dbReference type="Proteomes" id="UP000694725">
    <property type="component" value="Unplaced"/>
</dbReference>
<dbReference type="Proteomes" id="UP000694726">
    <property type="component" value="Unplaced"/>
</dbReference>
<dbReference type="Proteomes" id="UP000694727">
    <property type="component" value="Unplaced"/>
</dbReference>
<dbReference type="Proteomes" id="UP000694728">
    <property type="component" value="Unplaced"/>
</dbReference>
<dbReference type="GO" id="GO:0005783">
    <property type="term" value="C:endoplasmic reticulum"/>
    <property type="evidence" value="ECO:0000250"/>
    <property type="project" value="UniProtKB"/>
</dbReference>
<dbReference type="GO" id="GO:0005615">
    <property type="term" value="C:extracellular space"/>
    <property type="evidence" value="ECO:0000318"/>
    <property type="project" value="GO_Central"/>
</dbReference>
<dbReference type="GO" id="GO:0005794">
    <property type="term" value="C:Golgi apparatus"/>
    <property type="evidence" value="ECO:0000250"/>
    <property type="project" value="UniProtKB"/>
</dbReference>
<dbReference type="GO" id="GO:0005509">
    <property type="term" value="F:calcium ion binding"/>
    <property type="evidence" value="ECO:0007669"/>
    <property type="project" value="InterPro"/>
</dbReference>
<dbReference type="GO" id="GO:0004252">
    <property type="term" value="F:serine-type endopeptidase activity"/>
    <property type="evidence" value="ECO:0000250"/>
    <property type="project" value="UniProtKB"/>
</dbReference>
<dbReference type="GO" id="GO:0007596">
    <property type="term" value="P:blood coagulation"/>
    <property type="evidence" value="ECO:0000318"/>
    <property type="project" value="GO_Central"/>
</dbReference>
<dbReference type="GO" id="GO:0043066">
    <property type="term" value="P:negative regulation of apoptotic process"/>
    <property type="evidence" value="ECO:0000250"/>
    <property type="project" value="UniProtKB"/>
</dbReference>
<dbReference type="GO" id="GO:0030195">
    <property type="term" value="P:negative regulation of blood coagulation"/>
    <property type="evidence" value="ECO:0000318"/>
    <property type="project" value="GO_Central"/>
</dbReference>
<dbReference type="GO" id="GO:0050819">
    <property type="term" value="P:negative regulation of coagulation"/>
    <property type="evidence" value="ECO:0000250"/>
    <property type="project" value="UniProtKB"/>
</dbReference>
<dbReference type="GO" id="GO:0050728">
    <property type="term" value="P:negative regulation of inflammatory response"/>
    <property type="evidence" value="ECO:0000250"/>
    <property type="project" value="UniProtKB"/>
</dbReference>
<dbReference type="GO" id="GO:1903142">
    <property type="term" value="P:positive regulation of establishment of endothelial barrier"/>
    <property type="evidence" value="ECO:0000250"/>
    <property type="project" value="UniProtKB"/>
</dbReference>
<dbReference type="GO" id="GO:0006508">
    <property type="term" value="P:proteolysis"/>
    <property type="evidence" value="ECO:0007669"/>
    <property type="project" value="UniProtKB-KW"/>
</dbReference>
<dbReference type="CDD" id="cd00054">
    <property type="entry name" value="EGF_CA"/>
    <property type="match status" value="1"/>
</dbReference>
<dbReference type="CDD" id="cd00190">
    <property type="entry name" value="Tryp_SPc"/>
    <property type="match status" value="1"/>
</dbReference>
<dbReference type="FunFam" id="2.40.10.10:FF:000365">
    <property type="match status" value="1"/>
</dbReference>
<dbReference type="FunFam" id="2.10.25.10:FF:000549">
    <property type="entry name" value="Vitamin K-dependent protein C"/>
    <property type="match status" value="1"/>
</dbReference>
<dbReference type="FunFam" id="2.10.25.10:FF:000567">
    <property type="entry name" value="Vitamin K-dependent protein C"/>
    <property type="match status" value="1"/>
</dbReference>
<dbReference type="FunFam" id="2.40.10.10:FF:000256">
    <property type="entry name" value="Vitamin K-dependent protein C"/>
    <property type="match status" value="1"/>
</dbReference>
<dbReference type="FunFam" id="4.10.740.10:FF:000001">
    <property type="entry name" value="vitamin K-dependent protein S"/>
    <property type="match status" value="1"/>
</dbReference>
<dbReference type="Gene3D" id="4.10.740.10">
    <property type="entry name" value="Coagulation Factor IX"/>
    <property type="match status" value="1"/>
</dbReference>
<dbReference type="Gene3D" id="2.10.25.10">
    <property type="entry name" value="Laminin"/>
    <property type="match status" value="2"/>
</dbReference>
<dbReference type="Gene3D" id="2.40.10.10">
    <property type="entry name" value="Trypsin-like serine proteases"/>
    <property type="match status" value="2"/>
</dbReference>
<dbReference type="InterPro" id="IPR017857">
    <property type="entry name" value="Coagulation_fac-like_Gla_dom"/>
</dbReference>
<dbReference type="InterPro" id="IPR001881">
    <property type="entry name" value="EGF-like_Ca-bd_dom"/>
</dbReference>
<dbReference type="InterPro" id="IPR000742">
    <property type="entry name" value="EGF-like_dom"/>
</dbReference>
<dbReference type="InterPro" id="IPR000152">
    <property type="entry name" value="EGF-type_Asp/Asn_hydroxyl_site"/>
</dbReference>
<dbReference type="InterPro" id="IPR018097">
    <property type="entry name" value="EGF_Ca-bd_CS"/>
</dbReference>
<dbReference type="InterPro" id="IPR035972">
    <property type="entry name" value="GLA-like_dom_SF"/>
</dbReference>
<dbReference type="InterPro" id="IPR000294">
    <property type="entry name" value="GLA_domain"/>
</dbReference>
<dbReference type="InterPro" id="IPR012224">
    <property type="entry name" value="Pept_S1A_FX"/>
</dbReference>
<dbReference type="InterPro" id="IPR050442">
    <property type="entry name" value="Peptidase_S1_coag_factors"/>
</dbReference>
<dbReference type="InterPro" id="IPR009003">
    <property type="entry name" value="Peptidase_S1_PA"/>
</dbReference>
<dbReference type="InterPro" id="IPR043504">
    <property type="entry name" value="Peptidase_S1_PA_chymotrypsin"/>
</dbReference>
<dbReference type="InterPro" id="IPR001314">
    <property type="entry name" value="Peptidase_S1A"/>
</dbReference>
<dbReference type="InterPro" id="IPR001254">
    <property type="entry name" value="Trypsin_dom"/>
</dbReference>
<dbReference type="InterPro" id="IPR018114">
    <property type="entry name" value="TRYPSIN_HIS"/>
</dbReference>
<dbReference type="InterPro" id="IPR033116">
    <property type="entry name" value="TRYPSIN_SER"/>
</dbReference>
<dbReference type="PANTHER" id="PTHR24278">
    <property type="entry name" value="COAGULATION FACTOR"/>
    <property type="match status" value="1"/>
</dbReference>
<dbReference type="PANTHER" id="PTHR24278:SF0">
    <property type="entry name" value="VITAMIN K-DEPENDENT PROTEIN C"/>
    <property type="match status" value="1"/>
</dbReference>
<dbReference type="Pfam" id="PF00008">
    <property type="entry name" value="EGF"/>
    <property type="match status" value="1"/>
</dbReference>
<dbReference type="Pfam" id="PF14670">
    <property type="entry name" value="FXa_inhibition"/>
    <property type="match status" value="1"/>
</dbReference>
<dbReference type="Pfam" id="PF00594">
    <property type="entry name" value="Gla"/>
    <property type="match status" value="1"/>
</dbReference>
<dbReference type="Pfam" id="PF00089">
    <property type="entry name" value="Trypsin"/>
    <property type="match status" value="1"/>
</dbReference>
<dbReference type="PIRSF" id="PIRSF001143">
    <property type="entry name" value="Factor_X"/>
    <property type="match status" value="1"/>
</dbReference>
<dbReference type="PRINTS" id="PR00722">
    <property type="entry name" value="CHYMOTRYPSIN"/>
</dbReference>
<dbReference type="PRINTS" id="PR00001">
    <property type="entry name" value="GLABLOOD"/>
</dbReference>
<dbReference type="SMART" id="SM00181">
    <property type="entry name" value="EGF"/>
    <property type="match status" value="2"/>
</dbReference>
<dbReference type="SMART" id="SM00179">
    <property type="entry name" value="EGF_CA"/>
    <property type="match status" value="2"/>
</dbReference>
<dbReference type="SMART" id="SM00069">
    <property type="entry name" value="GLA"/>
    <property type="match status" value="1"/>
</dbReference>
<dbReference type="SMART" id="SM00020">
    <property type="entry name" value="Tryp_SPc"/>
    <property type="match status" value="1"/>
</dbReference>
<dbReference type="SUPFAM" id="SSF57196">
    <property type="entry name" value="EGF/Laminin"/>
    <property type="match status" value="2"/>
</dbReference>
<dbReference type="SUPFAM" id="SSF57630">
    <property type="entry name" value="GLA-domain"/>
    <property type="match status" value="1"/>
</dbReference>
<dbReference type="SUPFAM" id="SSF50494">
    <property type="entry name" value="Trypsin-like serine proteases"/>
    <property type="match status" value="1"/>
</dbReference>
<dbReference type="PROSITE" id="PS00010">
    <property type="entry name" value="ASX_HYDROXYL"/>
    <property type="match status" value="1"/>
</dbReference>
<dbReference type="PROSITE" id="PS00022">
    <property type="entry name" value="EGF_1"/>
    <property type="match status" value="1"/>
</dbReference>
<dbReference type="PROSITE" id="PS01186">
    <property type="entry name" value="EGF_2"/>
    <property type="match status" value="2"/>
</dbReference>
<dbReference type="PROSITE" id="PS50026">
    <property type="entry name" value="EGF_3"/>
    <property type="match status" value="1"/>
</dbReference>
<dbReference type="PROSITE" id="PS01187">
    <property type="entry name" value="EGF_CA"/>
    <property type="match status" value="1"/>
</dbReference>
<dbReference type="PROSITE" id="PS00011">
    <property type="entry name" value="GLA_1"/>
    <property type="match status" value="1"/>
</dbReference>
<dbReference type="PROSITE" id="PS50998">
    <property type="entry name" value="GLA_2"/>
    <property type="match status" value="1"/>
</dbReference>
<dbReference type="PROSITE" id="PS50240">
    <property type="entry name" value="TRYPSIN_DOM"/>
    <property type="match status" value="1"/>
</dbReference>
<dbReference type="PROSITE" id="PS00134">
    <property type="entry name" value="TRYPSIN_HIS"/>
    <property type="match status" value="1"/>
</dbReference>
<dbReference type="PROSITE" id="PS00135">
    <property type="entry name" value="TRYPSIN_SER"/>
    <property type="match status" value="1"/>
</dbReference>
<reference key="1">
    <citation type="journal article" date="2001" name="Cell. Mol. Life Sci.">
        <title>Porcine factor V: cDNA cloning, gene mapping, three-dimensional protein modeling of membrane binding sites and comparative anatomy of domains.</title>
        <authorList>
            <person name="Grimm D.R."/>
            <person name="Colter M.B."/>
            <person name="Braunschweig M."/>
            <person name="Alexander L.J."/>
            <person name="Neame P.J."/>
            <person name="Kim H.K.W."/>
        </authorList>
    </citation>
    <scope>NUCLEOTIDE SEQUENCE [MRNA]</scope>
    <source>
        <tissue>Liver</tissue>
    </source>
</reference>
<gene>
    <name type="primary">PROC</name>
</gene>
<comment type="function">
    <text evidence="3">Protein C is a vitamin K-dependent serine protease that regulates blood coagulation by inactivating factors Va and VIIIa in the presence of calcium ions and phospholipids. Exerts a protective effect on the endothelial cell barrier function.</text>
</comment>
<comment type="catalytic activity">
    <reaction>
        <text>Degradation of blood coagulation factors Va and VIIIa.</text>
        <dbReference type="EC" id="3.4.21.69"/>
    </reaction>
</comment>
<comment type="subunit">
    <text>Synthesized as a single chain precursor, which is cleaved into a light chain and a heavy chain held together by a disulfide bond. The enzyme is then activated by thrombin, which cleaves a tetradecapeptide from the amino end of the heavy chain; this reaction, which occurs at the surface of endothelial cells, is strongly promoted by thrombomodulin.</text>
</comment>
<comment type="subcellular location">
    <subcellularLocation>
        <location evidence="3">Secreted</location>
    </subcellularLocation>
    <subcellularLocation>
        <location evidence="3">Golgi apparatus</location>
    </subcellularLocation>
    <subcellularLocation>
        <location evidence="3">Endoplasmic reticulum</location>
    </subcellularLocation>
</comment>
<comment type="tissue specificity">
    <text>Plasma; synthesized in the liver.</text>
</comment>
<comment type="PTM">
    <text>The vitamin K-dependent, enzymatic carboxylation of some Glu residues allows the modified protein to bind calcium.</text>
</comment>
<comment type="PTM">
    <text evidence="1">The iron and 2-oxoglutarate dependent 3-hydroxylation of aspartate and asparagine is (R) stereospecific within EGF domains.</text>
</comment>
<comment type="miscellaneous">
    <text>Calcium also binds, with stronger affinity to another site, beyond the GLA domain. This GLA-independent binding site is necessary for the recognition of the thrombin-thrombomodulin complex.</text>
</comment>
<comment type="similarity">
    <text evidence="6">Belongs to the peptidase S1 family.</text>
</comment>
<organism>
    <name type="scientific">Sus scrofa</name>
    <name type="common">Pig</name>
    <dbReference type="NCBI Taxonomy" id="9823"/>
    <lineage>
        <taxon>Eukaryota</taxon>
        <taxon>Metazoa</taxon>
        <taxon>Chordata</taxon>
        <taxon>Craniata</taxon>
        <taxon>Vertebrata</taxon>
        <taxon>Euteleostomi</taxon>
        <taxon>Mammalia</taxon>
        <taxon>Eutheria</taxon>
        <taxon>Laurasiatheria</taxon>
        <taxon>Artiodactyla</taxon>
        <taxon>Suina</taxon>
        <taxon>Suidae</taxon>
        <taxon>Sus</taxon>
    </lineage>
</organism>
<feature type="signal peptide" evidence="1">
    <location>
        <begin position="1"/>
        <end position="18"/>
    </location>
</feature>
<feature type="propeptide" id="PRO_0000028117" evidence="1">
    <location>
        <begin position="19"/>
        <end position="41"/>
    </location>
</feature>
<feature type="chain" id="PRO_0000028118" description="Vitamin K-dependent protein C">
    <location>
        <begin position="42"/>
        <end position="459"/>
    </location>
</feature>
<feature type="chain" id="PRO_0000028119" description="Vitamin K-dependent protein C light chain" evidence="1">
    <location>
        <begin position="42"/>
        <end position="196"/>
    </location>
</feature>
<feature type="chain" id="PRO_0000028120" description="Vitamin K-dependent protein C heavy chain" evidence="1">
    <location>
        <begin position="199"/>
        <end position="459"/>
    </location>
</feature>
<feature type="peptide" id="PRO_0000028121" description="Activation peptide" evidence="1">
    <location>
        <begin position="199"/>
        <end position="213"/>
    </location>
</feature>
<feature type="domain" description="Gla" evidence="7">
    <location>
        <begin position="42"/>
        <end position="87"/>
    </location>
</feature>
<feature type="domain" description="EGF-like 1" evidence="5">
    <location>
        <begin position="96"/>
        <end position="131"/>
    </location>
</feature>
<feature type="domain" description="EGF-like 2" evidence="5">
    <location>
        <begin position="135"/>
        <end position="175"/>
    </location>
</feature>
<feature type="domain" description="Peptidase S1" evidence="6">
    <location>
        <begin position="214"/>
        <end position="448"/>
    </location>
</feature>
<feature type="active site" description="Charge relay system">
    <location>
        <position position="255"/>
    </location>
</feature>
<feature type="active site" description="Charge relay system">
    <location>
        <position position="301"/>
    </location>
</feature>
<feature type="active site" description="Charge relay system">
    <location>
        <position position="400"/>
    </location>
</feature>
<feature type="site" description="Cleavage; by thrombin" evidence="1">
    <location>
        <begin position="213"/>
        <end position="214"/>
    </location>
</feature>
<feature type="modified residue" description="4-carboxyglutamate" evidence="2 7">
    <location>
        <position position="47"/>
    </location>
</feature>
<feature type="modified residue" description="4-carboxyglutamate" evidence="2 7">
    <location>
        <position position="48"/>
    </location>
</feature>
<feature type="modified residue" description="4-carboxyglutamate" evidence="2 7">
    <location>
        <position position="55"/>
    </location>
</feature>
<feature type="modified residue" description="4-carboxyglutamate" evidence="2 7">
    <location>
        <position position="57"/>
    </location>
</feature>
<feature type="modified residue" description="4-carboxyglutamate" evidence="2 7">
    <location>
        <position position="60"/>
    </location>
</feature>
<feature type="modified residue" description="4-carboxyglutamate" evidence="2 7">
    <location>
        <position position="61"/>
    </location>
</feature>
<feature type="modified residue" description="4-carboxyglutamate" evidence="2 7">
    <location>
        <position position="66"/>
    </location>
</feature>
<feature type="modified residue" description="4-carboxyglutamate" evidence="2 7">
    <location>
        <position position="67"/>
    </location>
</feature>
<feature type="modified residue" description="4-carboxyglutamate" evidence="2 7">
    <location>
        <position position="70"/>
    </location>
</feature>
<feature type="modified residue" description="4-carboxyglutamate" evidence="2 7">
    <location>
        <position position="76"/>
    </location>
</feature>
<feature type="modified residue" description="(3R)-3-hydroxyaspartate" evidence="1">
    <location>
        <position position="112"/>
    </location>
</feature>
<feature type="glycosylation site" description="N-linked (GlcNAc...) asparagine" evidence="4">
    <location>
        <position position="138"/>
    </location>
</feature>
<feature type="glycosylation site" description="N-linked (GlcNAc...) asparagine" evidence="4">
    <location>
        <position position="292"/>
    </location>
</feature>
<feature type="glycosylation site" description="N-linked (GlcNAc...) asparagine" evidence="4">
    <location>
        <position position="353"/>
    </location>
</feature>
<feature type="disulfide bond" evidence="1">
    <location>
        <begin position="58"/>
        <end position="63"/>
    </location>
</feature>
<feature type="disulfide bond" evidence="1">
    <location>
        <begin position="91"/>
        <end position="110"/>
    </location>
</feature>
<feature type="disulfide bond" evidence="1">
    <location>
        <begin position="100"/>
        <end position="105"/>
    </location>
</feature>
<feature type="disulfide bond" evidence="1">
    <location>
        <begin position="104"/>
        <end position="119"/>
    </location>
</feature>
<feature type="disulfide bond" evidence="1">
    <location>
        <begin position="121"/>
        <end position="130"/>
    </location>
</feature>
<feature type="disulfide bond" evidence="1">
    <location>
        <begin position="139"/>
        <end position="150"/>
    </location>
</feature>
<feature type="disulfide bond" evidence="1">
    <location>
        <begin position="146"/>
        <end position="159"/>
    </location>
</feature>
<feature type="disulfide bond" evidence="1">
    <location>
        <begin position="161"/>
        <end position="174"/>
    </location>
</feature>
<feature type="disulfide bond" description="Interchain (between light and heavy chains)" evidence="5 6 7">
    <location>
        <begin position="182"/>
        <end position="321"/>
    </location>
</feature>
<feature type="disulfide bond" evidence="1">
    <location>
        <begin position="240"/>
        <end position="256"/>
    </location>
</feature>
<feature type="disulfide bond" evidence="1">
    <location>
        <begin position="371"/>
        <end position="385"/>
    </location>
</feature>
<feature type="disulfide bond" evidence="1">
    <location>
        <begin position="396"/>
        <end position="424"/>
    </location>
</feature>
<keyword id="KW-0094">Blood coagulation</keyword>
<keyword id="KW-0106">Calcium</keyword>
<keyword id="KW-0165">Cleavage on pair of basic residues</keyword>
<keyword id="KW-1015">Disulfide bond</keyword>
<keyword id="KW-0245">EGF-like domain</keyword>
<keyword id="KW-0256">Endoplasmic reticulum</keyword>
<keyword id="KW-0301">Gamma-carboxyglutamic acid</keyword>
<keyword id="KW-0325">Glycoprotein</keyword>
<keyword id="KW-0333">Golgi apparatus</keyword>
<keyword id="KW-0356">Hemostasis</keyword>
<keyword id="KW-0378">Hydrolase</keyword>
<keyword id="KW-0379">Hydroxylation</keyword>
<keyword id="KW-0645">Protease</keyword>
<keyword id="KW-1185">Reference proteome</keyword>
<keyword id="KW-0677">Repeat</keyword>
<keyword id="KW-0964">Secreted</keyword>
<keyword id="KW-0720">Serine protease</keyword>
<keyword id="KW-0732">Signal</keyword>
<keyword id="KW-0865">Zymogen</keyword>
<name>PROC_PIG</name>